<accession>P0C0V9</accession>
<accession>O39517</accession>
<accession>Q3T8I8</accession>
<keyword id="KW-0002">3D-structure</keyword>
<keyword id="KW-1015">Disulfide bond</keyword>
<keyword id="KW-0325">Glycoprotein</keyword>
<keyword id="KW-0348">Hemagglutinin</keyword>
<keyword id="KW-1032">Host cell membrane</keyword>
<keyword id="KW-1043">Host membrane</keyword>
<keyword id="KW-0378">Hydrolase</keyword>
<keyword id="KW-0472">Membrane</keyword>
<keyword id="KW-1185">Reference proteome</keyword>
<keyword id="KW-0732">Signal</keyword>
<keyword id="KW-0812">Transmembrane</keyword>
<keyword id="KW-1133">Transmembrane helix</keyword>
<keyword id="KW-0261">Viral envelope protein</keyword>
<keyword id="KW-0946">Virion</keyword>
<gene>
    <name type="primary">HE</name>
</gene>
<feature type="signal peptide" evidence="2">
    <location>
        <begin position="1"/>
        <end position="14"/>
    </location>
</feature>
<feature type="chain" id="PRO_0000045398" description="Hemagglutinin-esterase">
    <location>
        <begin position="15"/>
        <end position="416"/>
    </location>
</feature>
<feature type="topological domain" description="Virion surface" evidence="2">
    <location>
        <begin position="15"/>
        <end position="393"/>
    </location>
</feature>
<feature type="transmembrane region" description="Helical" evidence="2">
    <location>
        <begin position="394"/>
        <end position="414"/>
    </location>
</feature>
<feature type="topological domain" description="Intravirion" evidence="2">
    <location>
        <begin position="415"/>
        <end position="416"/>
    </location>
</feature>
<feature type="region of interest" description="Esterase domain first part" evidence="1">
    <location>
        <begin position="4"/>
        <end position="121"/>
    </location>
</feature>
<feature type="region of interest" description="Receptor binding" evidence="1">
    <location>
        <begin position="122"/>
        <end position="263"/>
    </location>
</feature>
<feature type="region of interest" description="Esterase domain second part" evidence="1">
    <location>
        <begin position="264"/>
        <end position="379"/>
    </location>
</feature>
<feature type="active site" description="Nucleophile" evidence="1">
    <location>
        <position position="37"/>
    </location>
</feature>
<feature type="active site" description="Charge relay system" evidence="1">
    <location>
        <position position="325"/>
    </location>
</feature>
<feature type="active site" description="Charge relay system" evidence="1">
    <location>
        <position position="328"/>
    </location>
</feature>
<feature type="glycosylation site" description="N-linked (GlcNAc...) asparagine; by host" evidence="3">
    <location>
        <position position="76"/>
    </location>
</feature>
<feature type="glycosylation site" description="N-linked (GlcNAc...) asparagine; by host" evidence="3">
    <location>
        <position position="257"/>
    </location>
</feature>
<feature type="glycosylation site" description="N-linked (GlcNAc...) asparagine; by host" evidence="3">
    <location>
        <position position="278"/>
    </location>
</feature>
<feature type="glycosylation site" description="N-linked (GlcNAc...) asparagine; by host" evidence="3">
    <location>
        <position position="313"/>
    </location>
</feature>
<feature type="glycosylation site" description="N-linked (GlcNAc...) asparagine; by host" evidence="3">
    <location>
        <position position="322"/>
    </location>
</feature>
<feature type="glycosylation site" description="N-linked (GlcNAc...) asparagine; by host" evidence="3">
    <location>
        <position position="343"/>
    </location>
</feature>
<feature type="disulfide bond" evidence="3">
    <location>
        <begin position="41"/>
        <end position="57"/>
    </location>
</feature>
<feature type="disulfide bond" evidence="3">
    <location>
        <begin position="88"/>
        <end position="136"/>
    </location>
</feature>
<feature type="disulfide bond" evidence="3">
    <location>
        <begin position="200"/>
        <end position="246"/>
    </location>
</feature>
<feature type="disulfide bond" evidence="3">
    <location>
        <begin position="206"/>
        <end position="213"/>
    </location>
</feature>
<feature type="disulfide bond" evidence="3">
    <location>
        <begin position="304"/>
        <end position="309"/>
    </location>
</feature>
<feature type="disulfide bond" evidence="3">
    <location>
        <begin position="346"/>
        <end position="371"/>
    </location>
</feature>
<feature type="sequence variant">
    <original>F</original>
    <variation>S</variation>
    <location>
        <position position="29"/>
    </location>
</feature>
<feature type="sequence variant">
    <original>D</original>
    <variation>G</variation>
    <location>
        <position position="114"/>
    </location>
</feature>
<feature type="sequence variant">
    <original>T</original>
    <variation>I</variation>
    <location>
        <position position="133"/>
    </location>
</feature>
<feature type="sequence variant">
    <original>Q</original>
    <variation>K</variation>
    <location>
        <position position="152"/>
    </location>
</feature>
<feature type="sequence variant">
    <original>V</original>
    <variation>E</variation>
    <location>
        <position position="155"/>
    </location>
</feature>
<feature type="sequence variant">
    <original>N</original>
    <variation>K</variation>
    <location>
        <position position="159"/>
    </location>
</feature>
<feature type="sequence variant">
    <original>L</original>
    <variation>R</variation>
    <location>
        <position position="214"/>
    </location>
</feature>
<feature type="sequence variant">
    <original>P</original>
    <variation>S</variation>
    <location>
        <position position="234"/>
    </location>
</feature>
<feature type="sequence variant">
    <original>S</original>
    <variation>L</variation>
    <location>
        <position position="238"/>
    </location>
</feature>
<feature type="sequence variant">
    <original>C</original>
    <variation>V</variation>
    <location>
        <position position="416"/>
    </location>
</feature>
<feature type="mutagenesis site" description="Strongly reduced activity toward 7,9-di-O-acetylated sialic acids and strongly increased activity toward 9-mono-O-acetylated sialic acids." evidence="3">
    <original>S</original>
    <variation>T</variation>
    <location>
        <position position="64"/>
    </location>
</feature>
<feature type="mutagenesis site" description="Strongly reduced activity toward both 7,9-di and 9-mono-O-acetylated sialic acids. Increased activity toward synthetic substrate (4-nitrophenyl)acetate." evidence="3">
    <original>R</original>
    <variation>H</variation>
    <location>
        <position position="103"/>
    </location>
</feature>
<feature type="mutagenesis site" description="Reduced lectin activity." evidence="3">
    <original>W</original>
    <variation>A</variation>
    <location>
        <position position="109"/>
    </location>
</feature>
<feature type="mutagenesis site" description="Reduced lectin activity." evidence="3">
    <original>L</original>
    <variation>A</variation>
    <location>
        <position position="168"/>
    </location>
</feature>
<feature type="mutagenesis site" description="Reduced lectin activity." evidence="3">
    <original>L</original>
    <variation>A</variation>
    <location>
        <position position="170"/>
    </location>
</feature>
<feature type="mutagenesis site" description="Loss of lectin activity." evidence="3">
    <original>F</original>
    <variation>A</variation>
    <location>
        <position position="207"/>
    </location>
</feature>
<feature type="strand" evidence="5">
    <location>
        <begin position="21"/>
        <end position="23"/>
    </location>
</feature>
<feature type="strand" evidence="5">
    <location>
        <begin position="27"/>
        <end position="29"/>
    </location>
</feature>
<feature type="strand" evidence="5">
    <location>
        <begin position="31"/>
        <end position="36"/>
    </location>
</feature>
<feature type="helix" evidence="5">
    <location>
        <begin position="37"/>
        <end position="39"/>
    </location>
</feature>
<feature type="turn" evidence="5">
    <location>
        <begin position="44"/>
        <end position="49"/>
    </location>
</feature>
<feature type="helix" evidence="5">
    <location>
        <begin position="54"/>
        <end position="59"/>
    </location>
</feature>
<feature type="strand" evidence="5">
    <location>
        <begin position="60"/>
        <end position="62"/>
    </location>
</feature>
<feature type="helix" evidence="5">
    <location>
        <begin position="68"/>
        <end position="73"/>
    </location>
</feature>
<feature type="strand" evidence="5">
    <location>
        <begin position="86"/>
        <end position="88"/>
    </location>
</feature>
<feature type="strand" evidence="5">
    <location>
        <begin position="90"/>
        <end position="95"/>
    </location>
</feature>
<feature type="helix" evidence="5">
    <location>
        <begin position="102"/>
        <end position="104"/>
    </location>
</feature>
<feature type="strand" evidence="5">
    <location>
        <begin position="108"/>
        <end position="111"/>
    </location>
</feature>
<feature type="helix" evidence="5">
    <location>
        <begin position="112"/>
        <end position="131"/>
    </location>
</feature>
<feature type="strand" evidence="5">
    <location>
        <begin position="135"/>
        <end position="141"/>
    </location>
</feature>
<feature type="strand" evidence="5">
    <location>
        <begin position="151"/>
        <end position="153"/>
    </location>
</feature>
<feature type="strand" evidence="5">
    <location>
        <begin position="164"/>
        <end position="173"/>
    </location>
</feature>
<feature type="strand" evidence="5">
    <location>
        <begin position="177"/>
        <end position="183"/>
    </location>
</feature>
<feature type="strand" evidence="5">
    <location>
        <begin position="185"/>
        <end position="187"/>
    </location>
</feature>
<feature type="strand" evidence="5">
    <location>
        <begin position="193"/>
        <end position="202"/>
    </location>
</feature>
<feature type="strand" evidence="5">
    <location>
        <begin position="207"/>
        <end position="209"/>
    </location>
</feature>
<feature type="strand" evidence="5">
    <location>
        <begin position="212"/>
        <end position="214"/>
    </location>
</feature>
<feature type="strand" evidence="5">
    <location>
        <begin position="216"/>
        <end position="222"/>
    </location>
</feature>
<feature type="strand" evidence="5">
    <location>
        <begin position="225"/>
        <end position="231"/>
    </location>
</feature>
<feature type="strand" evidence="5">
    <location>
        <begin position="244"/>
        <end position="251"/>
    </location>
</feature>
<feature type="strand" evidence="5">
    <location>
        <begin position="253"/>
        <end position="267"/>
    </location>
</feature>
<feature type="strand" evidence="5">
    <location>
        <begin position="269"/>
        <end position="274"/>
    </location>
</feature>
<feature type="strand" evidence="5">
    <location>
        <begin position="283"/>
        <end position="286"/>
    </location>
</feature>
<feature type="helix" evidence="5">
    <location>
        <begin position="299"/>
        <end position="303"/>
    </location>
</feature>
<feature type="turn" evidence="5">
    <location>
        <begin position="306"/>
        <end position="308"/>
    </location>
</feature>
<feature type="strand" evidence="5">
    <location>
        <begin position="309"/>
        <end position="312"/>
    </location>
</feature>
<feature type="strand" evidence="5">
    <location>
        <begin position="320"/>
        <end position="325"/>
    </location>
</feature>
<feature type="strand" evidence="5">
    <location>
        <begin position="328"/>
        <end position="330"/>
    </location>
</feature>
<feature type="helix" evidence="5">
    <location>
        <begin position="331"/>
        <end position="337"/>
    </location>
</feature>
<feature type="helix" evidence="5">
    <location>
        <begin position="338"/>
        <end position="341"/>
    </location>
</feature>
<feature type="strand" evidence="5">
    <location>
        <begin position="345"/>
        <end position="348"/>
    </location>
</feature>
<feature type="strand" evidence="5">
    <location>
        <begin position="351"/>
        <end position="353"/>
    </location>
</feature>
<feature type="strand" evidence="5">
    <location>
        <begin position="357"/>
        <end position="361"/>
    </location>
</feature>
<feature type="strand" evidence="5">
    <location>
        <begin position="368"/>
        <end position="370"/>
    </location>
</feature>
<feature type="helix" evidence="5">
    <location>
        <begin position="375"/>
        <end position="378"/>
    </location>
</feature>
<proteinExistence type="evidence at protein level"/>
<reference key="1">
    <citation type="journal article" date="1998" name="Virus Res.">
        <title>Bovine torovirus: sequencing of the structural genes and expression of the nucleocapsid protein of Breda virus.</title>
        <authorList>
            <person name="Duckmanton L.M."/>
            <person name="Tellier R."/>
            <person name="Liu P."/>
            <person name="Petric M."/>
        </authorList>
    </citation>
    <scope>NUCLEOTIDE SEQUENCE [GENOMIC RNA]</scope>
</reference>
<reference key="2">
    <citation type="journal article" date="2006" name="Virus Res.">
        <title>The complete sequence of the bovine torovirus genome.</title>
        <authorList>
            <person name="Draker R."/>
            <person name="Roper R.L."/>
            <person name="Petric M."/>
            <person name="Tellier R."/>
        </authorList>
    </citation>
    <scope>NUCLEOTIDE SEQUENCE [GENOMIC RNA]</scope>
</reference>
<reference key="3">
    <citation type="journal article" date="2005" name="J. Biol. Chem.">
        <title>Nidovirus sialate-O-acetylesterases: evolution and substrate specificity of coronaviral and toroviral receptor-destroying enzymes.</title>
        <authorList>
            <person name="Smits S.L."/>
            <person name="Gerwig G.J."/>
            <person name="van Vliet A.L."/>
            <person name="Lissenberg A."/>
            <person name="Briza P."/>
            <person name="Kamerling J.P."/>
            <person name="Vlasak R."/>
            <person name="de Groot R.J."/>
        </authorList>
    </citation>
    <scope>CHARACTERIZATION</scope>
</reference>
<reference key="4">
    <citation type="journal article" date="2009" name="Proc. Natl. Acad. Sci. U.S.A.">
        <title>Structural basis for ligand and substrate recognition by torovirus hemagglutinin esterases.</title>
        <authorList>
            <person name="Langereis M.A."/>
            <person name="Zeng Q."/>
            <person name="Gerwig G.J."/>
            <person name="Frey B."/>
            <person name="von Itzstein M."/>
            <person name="Kamerling J.P."/>
            <person name="de Groot R.J."/>
            <person name="Huizinga E.G."/>
        </authorList>
    </citation>
    <scope>X-RAY CRYSTALLOGRAPHY (1.80 ANGSTROMS) OF 15-392 OF APOPROTEIN AND IN COMPLEX WITH RECEPTOR ANALOG</scope>
    <scope>FUNCTION</scope>
    <scope>CATALYTIC ACTIVITY</scope>
    <scope>GLYCOSYLATION AT ASN-76; ASN-257; ASN-278; ASN-313; ASN-322 AND ASN-343</scope>
    <scope>DISULFIDE BONDS</scope>
    <scope>MUTAGENESIS OF SER-64; ARG-103; TRP-109; LEU-168; LEU-170 AND PHE-207</scope>
</reference>
<protein>
    <recommendedName>
        <fullName>Hemagglutinin-esterase</fullName>
        <shortName>HE protein</shortName>
        <ecNumber>3.1.1.53</ecNumber>
    </recommendedName>
    <alternativeName>
        <fullName>E3 glycoprotein</fullName>
    </alternativeName>
</protein>
<name>HEMA_BRV1</name>
<organism>
    <name type="scientific">Breda virus 1</name>
    <name type="common">BRV-1</name>
    <dbReference type="NCBI Taxonomy" id="360393"/>
    <lineage>
        <taxon>Viruses</taxon>
        <taxon>Riboviria</taxon>
        <taxon>Orthornavirae</taxon>
        <taxon>Pisuviricota</taxon>
        <taxon>Pisoniviricetes</taxon>
        <taxon>Nidovirales</taxon>
        <taxon>Tornidovirineae</taxon>
        <taxon>Tobaniviridae</taxon>
        <taxon>Torovirinae</taxon>
        <taxon>Torovirus</taxon>
        <taxon>Renitovirus</taxon>
        <taxon>Bovine torovirus</taxon>
    </lineage>
</organism>
<sequence>MLSLILFFPSFAFAATPVTPYYGPGHITFDWCGFGDSRSDCTNPQSPMSLDIPQQLCPKFSSKSSSSMFLSLHWNNHSSFVSYDYFNCGVEKVFYEGVNFSPRKQYSCWDEGVDGWIELKTRFYTKLYQMATTSRCIKLIQLQAPSSLPTLQAGVCRTNKQLPDNPRLALLSDTVPTSVQFVLPGSSGTTICTKHLVPFCYLNHGCFTTGGSCLPFGVSYVSDSFYYGYYDATPQIGSTESHDYVCDYLFMEPGTYNASTVGKFLVYPTKSYCMDTMNITVPVQAVQSIWSEQYASDDAIGQACKAPYCIFYNKTTPYTVTNGSDANHGDDEVRMMMQGLLRNSSCISPQGSTPLALYSTEMIYEPNYGSCPQFYKLFDTSGNENIDVISSSYFVATWVLLVVVVILIFVIISFFC</sequence>
<organismHost>
    <name type="scientific">Bos taurus</name>
    <name type="common">Bovine</name>
    <dbReference type="NCBI Taxonomy" id="9913"/>
</organismHost>
<comment type="function">
    <text evidence="3">Structural protein that makes short spikes at the surface of the virus. Contains receptor binding and receptor-destroying activities. Mediates de-O-acetylation of N-acetyl-9-di-O-acetylneuraminic acid, which is probably the receptor determinant recognized by the virus on the surface of erythrocytes and susceptible cells. Also hydrolyzes 5-N-acetyl-4-O-acetylneuraminic acid and N-acetyl-9-O-acetylneuraminic acid, but displays a substrate preference for N-acetyl-9-di-O-acetylneuraminic acid. This receptor-destroying activity is important for virus release as it probably helps preventing self-aggregation and ensures the efficient spread of the progeny virus from cell to cell. May serve as a secondary viral attachment protein for initiating infection, the spike protein being the major one. Seems to be a 'luxury' protein that is not absolutely necessary for virus infection in culture. However, its presence in the virus may alter its pathogenicity. May become a target for both the humoral and the cellular branches of the immune system.</text>
</comment>
<comment type="catalytic activity">
    <reaction evidence="3">
        <text>N-acetyl-9-O-acetylneuraminate + H2O = N-acetylneuraminate + acetate + H(+)</text>
        <dbReference type="Rhea" id="RHEA:22600"/>
        <dbReference type="ChEBI" id="CHEBI:15377"/>
        <dbReference type="ChEBI" id="CHEBI:15378"/>
        <dbReference type="ChEBI" id="CHEBI:28999"/>
        <dbReference type="ChEBI" id="CHEBI:30089"/>
        <dbReference type="ChEBI" id="CHEBI:35418"/>
        <dbReference type="EC" id="3.1.1.53"/>
    </reaction>
</comment>
<comment type="catalytic activity">
    <reaction evidence="3">
        <text>N-acetyl-4-O-acetylneuraminate + H2O = N-acetylneuraminate + acetate + H(+)</text>
        <dbReference type="Rhea" id="RHEA:25564"/>
        <dbReference type="ChEBI" id="CHEBI:15377"/>
        <dbReference type="ChEBI" id="CHEBI:15378"/>
        <dbReference type="ChEBI" id="CHEBI:29006"/>
        <dbReference type="ChEBI" id="CHEBI:30089"/>
        <dbReference type="ChEBI" id="CHEBI:35418"/>
        <dbReference type="EC" id="3.1.1.53"/>
    </reaction>
</comment>
<comment type="subcellular location">
    <subcellularLocation>
        <location evidence="4">Virion membrane</location>
        <topology evidence="4">Single-pass type I membrane protein</topology>
    </subcellularLocation>
    <subcellularLocation>
        <location evidence="4">Host cell membrane</location>
        <topology evidence="4">Single-pass type I membrane protein</topology>
    </subcellularLocation>
    <text evidence="1">In infected cells becomes incorporated into the envelope of virions during virus assembly at the endoplasmic reticulum and cis Golgi. However, some may escape incorporation into virions and subsequently migrate to the cell surface (By similarity).</text>
</comment>
<comment type="similarity">
    <text evidence="4">Belongs to the influenza type C/coronaviruses hemagglutinin-esterase family.</text>
</comment>
<dbReference type="EC" id="3.1.1.53"/>
<dbReference type="EMBL" id="AF076621">
    <property type="protein sequence ID" value="AAD03842.1"/>
    <property type="molecule type" value="Genomic_RNA"/>
</dbReference>
<dbReference type="EMBL" id="AY427798">
    <property type="protein sequence ID" value="AAS17961.1"/>
    <property type="molecule type" value="Genomic_RNA"/>
</dbReference>
<dbReference type="RefSeq" id="YP_337909.1">
    <property type="nucleotide sequence ID" value="NC_007447.1"/>
</dbReference>
<dbReference type="PDB" id="3I26">
    <property type="method" value="X-ray"/>
    <property type="resolution" value="1.80 A"/>
    <property type="chains" value="A/B/C/D=15-392"/>
</dbReference>
<dbReference type="PDB" id="3I27">
    <property type="method" value="X-ray"/>
    <property type="resolution" value="2.00 A"/>
    <property type="chains" value="A/B/C/D=15-392"/>
</dbReference>
<dbReference type="PDBsum" id="3I26"/>
<dbReference type="PDBsum" id="3I27"/>
<dbReference type="SMR" id="P0C0V9"/>
<dbReference type="DIP" id="DIP-48962N"/>
<dbReference type="UniLectin" id="P0C0V9"/>
<dbReference type="GlyCosmos" id="P0C0V9">
    <property type="glycosylation" value="6 sites, No reported glycans"/>
</dbReference>
<dbReference type="iPTMnet" id="P0C0V9"/>
<dbReference type="GeneID" id="3707767"/>
<dbReference type="KEGG" id="vg:3707767"/>
<dbReference type="EvolutionaryTrace" id="P0C0V9"/>
<dbReference type="Proteomes" id="UP000000355">
    <property type="component" value="Segment"/>
</dbReference>
<dbReference type="GO" id="GO:0020002">
    <property type="term" value="C:host cell plasma membrane"/>
    <property type="evidence" value="ECO:0007669"/>
    <property type="project" value="UniProtKB-SubCell"/>
</dbReference>
<dbReference type="GO" id="GO:0016020">
    <property type="term" value="C:membrane"/>
    <property type="evidence" value="ECO:0007669"/>
    <property type="project" value="UniProtKB-KW"/>
</dbReference>
<dbReference type="GO" id="GO:0019031">
    <property type="term" value="C:viral envelope"/>
    <property type="evidence" value="ECO:0007669"/>
    <property type="project" value="UniProtKB-KW"/>
</dbReference>
<dbReference type="GO" id="GO:0055036">
    <property type="term" value="C:virion membrane"/>
    <property type="evidence" value="ECO:0007669"/>
    <property type="project" value="UniProtKB-SubCell"/>
</dbReference>
<dbReference type="GO" id="GO:0030246">
    <property type="term" value="F:carbohydrate binding"/>
    <property type="evidence" value="ECO:0000315"/>
    <property type="project" value="UniProtKB"/>
</dbReference>
<dbReference type="GO" id="GO:0046789">
    <property type="term" value="F:host cell surface receptor binding"/>
    <property type="evidence" value="ECO:0007669"/>
    <property type="project" value="InterPro"/>
</dbReference>
<dbReference type="GO" id="GO:0106331">
    <property type="term" value="F:sialate 4-O-acetylesterase activity"/>
    <property type="evidence" value="ECO:0007669"/>
    <property type="project" value="RHEA"/>
</dbReference>
<dbReference type="GO" id="GO:0106330">
    <property type="term" value="F:sialate 9-O-acetylesterase activity"/>
    <property type="evidence" value="ECO:0007669"/>
    <property type="project" value="RHEA"/>
</dbReference>
<dbReference type="GO" id="GO:0001681">
    <property type="term" value="F:sialate O-acetylesterase activity"/>
    <property type="evidence" value="ECO:0000314"/>
    <property type="project" value="UniProtKB"/>
</dbReference>
<dbReference type="GO" id="GO:0019064">
    <property type="term" value="P:fusion of virus membrane with host plasma membrane"/>
    <property type="evidence" value="ECO:0007669"/>
    <property type="project" value="InterPro"/>
</dbReference>
<dbReference type="InterPro" id="IPR008980">
    <property type="entry name" value="Capsid_hemagglutn"/>
</dbReference>
<dbReference type="InterPro" id="IPR007142">
    <property type="entry name" value="Hemagglutn-estrase_core"/>
</dbReference>
<dbReference type="InterPro" id="IPR003860">
    <property type="entry name" value="Hemagglutn-estrase_hemagglutn"/>
</dbReference>
<dbReference type="Pfam" id="PF03996">
    <property type="entry name" value="Hema_esterase"/>
    <property type="match status" value="1"/>
</dbReference>
<dbReference type="Pfam" id="PF02710">
    <property type="entry name" value="Hema_HEFG"/>
    <property type="match status" value="1"/>
</dbReference>
<dbReference type="SUPFAM" id="SSF52266">
    <property type="entry name" value="SGNH hydrolase"/>
    <property type="match status" value="1"/>
</dbReference>
<dbReference type="SUPFAM" id="SSF49818">
    <property type="entry name" value="Viral protein domain"/>
    <property type="match status" value="1"/>
</dbReference>
<evidence type="ECO:0000250" key="1"/>
<evidence type="ECO:0000255" key="2"/>
<evidence type="ECO:0000269" key="3">
    <source>
    </source>
</evidence>
<evidence type="ECO:0000305" key="4"/>
<evidence type="ECO:0007829" key="5">
    <source>
        <dbReference type="PDB" id="3I26"/>
    </source>
</evidence>